<feature type="chain" id="PRO_0000100660" description="Phosphoadenosine phosphosulfate reductase">
    <location>
        <begin position="1"/>
        <end position="306"/>
    </location>
</feature>
<feature type="region of interest" description="Disordered" evidence="1">
    <location>
        <begin position="1"/>
        <end position="30"/>
    </location>
</feature>
<feature type="region of interest" description="Disordered" evidence="1">
    <location>
        <begin position="245"/>
        <end position="266"/>
    </location>
</feature>
<feature type="sequence conflict" description="In Ref. 1; X82555." evidence="2" ref="1">
    <location>
        <begin position="291"/>
        <end position="298"/>
    </location>
</feature>
<sequence length="306" mass="35447">MPAKMHSNYPSDSETAELRDSTESGYVSGGSSEEYLPEIVFTKPHLQFLNRQLQFLEPQDVLRWCVTSLPHLYQTTAFGLTGLVIMDMLSKLSIPRPQMVNLIFLDTLHHFPETLKLVDNVRKRYPLQHIHVYKPQGVETEEEFAKKHGERLWEKDDQLYDWIAKVEPAQRAYRELNVHAVLTGRRRSQGGKRGDLDIIEVDEAGLIKINPLANWTFDQVKQYVKENDIPYNELLDKGYKSVGDYHSTSPVKENEDERSGRWKGQAKTECGIHNPRSKYAQYLMDMERKRQEEALSQALQNKLTTA</sequence>
<organism>
    <name type="scientific">Emericella nidulans (strain FGSC A4 / ATCC 38163 / CBS 112.46 / NRRL 194 / M139)</name>
    <name type="common">Aspergillus nidulans</name>
    <dbReference type="NCBI Taxonomy" id="227321"/>
    <lineage>
        <taxon>Eukaryota</taxon>
        <taxon>Fungi</taxon>
        <taxon>Dikarya</taxon>
        <taxon>Ascomycota</taxon>
        <taxon>Pezizomycotina</taxon>
        <taxon>Eurotiomycetes</taxon>
        <taxon>Eurotiomycetidae</taxon>
        <taxon>Eurotiales</taxon>
        <taxon>Aspergillaceae</taxon>
        <taxon>Aspergillus</taxon>
        <taxon>Aspergillus subgen. Nidulantes</taxon>
    </lineage>
</organism>
<keyword id="KW-0028">Amino-acid biosynthesis</keyword>
<keyword id="KW-0198">Cysteine biosynthesis</keyword>
<keyword id="KW-0486">Methionine biosynthesis</keyword>
<keyword id="KW-0521">NADP</keyword>
<keyword id="KW-0560">Oxidoreductase</keyword>
<keyword id="KW-1185">Reference proteome</keyword>
<dbReference type="EC" id="1.8.4.8"/>
<dbReference type="EMBL" id="X82555">
    <property type="status" value="NOT_ANNOTATED_CDS"/>
    <property type="molecule type" value="Genomic_DNA"/>
</dbReference>
<dbReference type="EMBL" id="AACD01000080">
    <property type="protein sequence ID" value="EAA60812.1"/>
    <property type="status" value="ALT_INIT"/>
    <property type="molecule type" value="Genomic_DNA"/>
</dbReference>
<dbReference type="EMBL" id="BN001303">
    <property type="protein sequence ID" value="CBF76822.1"/>
    <property type="status" value="ALT_SEQ"/>
    <property type="molecule type" value="Genomic_DNA"/>
</dbReference>
<dbReference type="RefSeq" id="XP_662374.1">
    <property type="nucleotide sequence ID" value="XM_657282.1"/>
</dbReference>
<dbReference type="SMR" id="P56859"/>
<dbReference type="FunCoup" id="P56859">
    <property type="interactions" value="618"/>
</dbReference>
<dbReference type="STRING" id="227321.P56859"/>
<dbReference type="VEuPathDB" id="FungiDB:AN4770"/>
<dbReference type="eggNOG" id="KOG0189">
    <property type="taxonomic scope" value="Eukaryota"/>
</dbReference>
<dbReference type="HOGENOM" id="CLU_044089_0_0_1"/>
<dbReference type="InParanoid" id="P56859"/>
<dbReference type="UniPathway" id="UPA00140">
    <property type="reaction ID" value="UER00206"/>
</dbReference>
<dbReference type="Proteomes" id="UP000000560">
    <property type="component" value="Chromosome III"/>
</dbReference>
<dbReference type="GO" id="GO:0004604">
    <property type="term" value="F:phosphoadenylyl-sulfate reductase (thioredoxin) activity"/>
    <property type="evidence" value="ECO:0000315"/>
    <property type="project" value="AspGD"/>
</dbReference>
<dbReference type="GO" id="GO:0019344">
    <property type="term" value="P:cysteine biosynthetic process"/>
    <property type="evidence" value="ECO:0007669"/>
    <property type="project" value="UniProtKB-KW"/>
</dbReference>
<dbReference type="GO" id="GO:0070814">
    <property type="term" value="P:hydrogen sulfide biosynthetic process"/>
    <property type="evidence" value="ECO:0007669"/>
    <property type="project" value="UniProtKB-UniPathway"/>
</dbReference>
<dbReference type="GO" id="GO:0009086">
    <property type="term" value="P:methionine biosynthetic process"/>
    <property type="evidence" value="ECO:0007669"/>
    <property type="project" value="UniProtKB-KW"/>
</dbReference>
<dbReference type="GO" id="GO:0000103">
    <property type="term" value="P:sulfate assimilation"/>
    <property type="evidence" value="ECO:0000315"/>
    <property type="project" value="AspGD"/>
</dbReference>
<dbReference type="GO" id="GO:0019379">
    <property type="term" value="P:sulfate assimilation, phosphoadenylyl sulfate reduction by phosphoadenylyl-sulfate reductase (thioredoxin)"/>
    <property type="evidence" value="ECO:0000318"/>
    <property type="project" value="GO_Central"/>
</dbReference>
<dbReference type="CDD" id="cd23945">
    <property type="entry name" value="PAPS_reductase"/>
    <property type="match status" value="1"/>
</dbReference>
<dbReference type="FunFam" id="3.40.50.620:FF:000151">
    <property type="entry name" value="Phosphoadenosine phosphosulfate reductase"/>
    <property type="match status" value="1"/>
</dbReference>
<dbReference type="Gene3D" id="3.40.50.620">
    <property type="entry name" value="HUPs"/>
    <property type="match status" value="1"/>
</dbReference>
<dbReference type="HAMAP" id="MF_00063">
    <property type="entry name" value="CysH"/>
    <property type="match status" value="1"/>
</dbReference>
<dbReference type="InterPro" id="IPR004511">
    <property type="entry name" value="PAPS/APS_Rdtase"/>
</dbReference>
<dbReference type="InterPro" id="IPR002500">
    <property type="entry name" value="PAPS_reduct_dom"/>
</dbReference>
<dbReference type="InterPro" id="IPR011800">
    <property type="entry name" value="PAPS_reductase_CysH"/>
</dbReference>
<dbReference type="InterPro" id="IPR014729">
    <property type="entry name" value="Rossmann-like_a/b/a_fold"/>
</dbReference>
<dbReference type="NCBIfam" id="TIGR00434">
    <property type="entry name" value="cysH"/>
    <property type="match status" value="1"/>
</dbReference>
<dbReference type="NCBIfam" id="TIGR02057">
    <property type="entry name" value="PAPS_reductase"/>
    <property type="match status" value="1"/>
</dbReference>
<dbReference type="NCBIfam" id="NF002537">
    <property type="entry name" value="PRK02090.1"/>
    <property type="match status" value="1"/>
</dbReference>
<dbReference type="PANTHER" id="PTHR46509">
    <property type="entry name" value="PHOSPHOADENOSINE PHOSPHOSULFATE REDUCTASE"/>
    <property type="match status" value="1"/>
</dbReference>
<dbReference type="PANTHER" id="PTHR46509:SF1">
    <property type="entry name" value="PHOSPHOADENOSINE PHOSPHOSULFATE REDUCTASE"/>
    <property type="match status" value="1"/>
</dbReference>
<dbReference type="Pfam" id="PF01507">
    <property type="entry name" value="PAPS_reduct"/>
    <property type="match status" value="1"/>
</dbReference>
<dbReference type="SUPFAM" id="SSF52402">
    <property type="entry name" value="Adenine nucleotide alpha hydrolases-like"/>
    <property type="match status" value="1"/>
</dbReference>
<evidence type="ECO:0000256" key="1">
    <source>
        <dbReference type="SAM" id="MobiDB-lite"/>
    </source>
</evidence>
<evidence type="ECO:0000305" key="2"/>
<accession>P56859</accession>
<accession>C8VAQ1</accession>
<accession>Q5B3W0</accession>
<comment type="function">
    <text>The NADP dependent reduction of PAPS into sulfite involves thioredoxin which probably plays the role of a thiol carrier.</text>
</comment>
<comment type="catalytic activity">
    <reaction>
        <text>[thioredoxin]-disulfide + sulfite + adenosine 3',5'-bisphosphate + 2 H(+) = [thioredoxin]-dithiol + 3'-phosphoadenylyl sulfate</text>
        <dbReference type="Rhea" id="RHEA:11724"/>
        <dbReference type="Rhea" id="RHEA-COMP:10698"/>
        <dbReference type="Rhea" id="RHEA-COMP:10700"/>
        <dbReference type="ChEBI" id="CHEBI:15378"/>
        <dbReference type="ChEBI" id="CHEBI:17359"/>
        <dbReference type="ChEBI" id="CHEBI:29950"/>
        <dbReference type="ChEBI" id="CHEBI:50058"/>
        <dbReference type="ChEBI" id="CHEBI:58339"/>
        <dbReference type="ChEBI" id="CHEBI:58343"/>
        <dbReference type="EC" id="1.8.4.8"/>
    </reaction>
</comment>
<comment type="pathway">
    <text>Sulfur metabolism; hydrogen sulfide biosynthesis; sulfite from sulfate: step 3/3.</text>
</comment>
<comment type="similarity">
    <text evidence="2">Belongs to the PAPS reductase family. CysH subfamily.</text>
</comment>
<comment type="sequence caution" evidence="2">
    <conflict type="erroneous gene model prediction">
        <sequence resource="EMBL-CDS" id="CBF76822"/>
    </conflict>
</comment>
<comment type="sequence caution" evidence="2">
    <conflict type="erroneous initiation">
        <sequence resource="EMBL-CDS" id="EAA60812"/>
    </conflict>
    <text>Truncated N-terminus.</text>
</comment>
<comment type="sequence caution" evidence="2">
    <conflict type="frameshift">
        <sequence resource="EMBL" id="X82555"/>
    </conflict>
</comment>
<proteinExistence type="inferred from homology"/>
<gene>
    <name type="primary">sA</name>
    <name type="ORF">AN4770</name>
</gene>
<reference key="1">
    <citation type="journal article" date="1995" name="Mol. Gen. Genet.">
        <title>Isolation and characterisation of genes for sulphate activation and reduction in Aspergillus nidulans: implications for evolution of an allosteric control region by gene duplication.</title>
        <authorList>
            <person name="Borges-Walmsley M.I."/>
            <person name="Turner G."/>
            <person name="Bailey A.M."/>
            <person name="Brown J."/>
            <person name="Lehmbeck J."/>
            <person name="Clausen I.G."/>
        </authorList>
    </citation>
    <scope>NUCLEOTIDE SEQUENCE [GENOMIC DNA]</scope>
</reference>
<reference key="2">
    <citation type="journal article" date="2005" name="Nature">
        <title>Sequencing of Aspergillus nidulans and comparative analysis with A. fumigatus and A. oryzae.</title>
        <authorList>
            <person name="Galagan J.E."/>
            <person name="Calvo S.E."/>
            <person name="Cuomo C."/>
            <person name="Ma L.-J."/>
            <person name="Wortman J.R."/>
            <person name="Batzoglou S."/>
            <person name="Lee S.-I."/>
            <person name="Bastuerkmen M."/>
            <person name="Spevak C.C."/>
            <person name="Clutterbuck J."/>
            <person name="Kapitonov V."/>
            <person name="Jurka J."/>
            <person name="Scazzocchio C."/>
            <person name="Farman M.L."/>
            <person name="Butler J."/>
            <person name="Purcell S."/>
            <person name="Harris S."/>
            <person name="Braus G.H."/>
            <person name="Draht O."/>
            <person name="Busch S."/>
            <person name="D'Enfert C."/>
            <person name="Bouchier C."/>
            <person name="Goldman G.H."/>
            <person name="Bell-Pedersen D."/>
            <person name="Griffiths-Jones S."/>
            <person name="Doonan J.H."/>
            <person name="Yu J."/>
            <person name="Vienken K."/>
            <person name="Pain A."/>
            <person name="Freitag M."/>
            <person name="Selker E.U."/>
            <person name="Archer D.B."/>
            <person name="Penalva M.A."/>
            <person name="Oakley B.R."/>
            <person name="Momany M."/>
            <person name="Tanaka T."/>
            <person name="Kumagai T."/>
            <person name="Asai K."/>
            <person name="Machida M."/>
            <person name="Nierman W.C."/>
            <person name="Denning D.W."/>
            <person name="Caddick M.X."/>
            <person name="Hynes M."/>
            <person name="Paoletti M."/>
            <person name="Fischer R."/>
            <person name="Miller B.L."/>
            <person name="Dyer P.S."/>
            <person name="Sachs M.S."/>
            <person name="Osmani S.A."/>
            <person name="Birren B.W."/>
        </authorList>
    </citation>
    <scope>NUCLEOTIDE SEQUENCE [LARGE SCALE GENOMIC DNA]</scope>
    <source>
        <strain>FGSC A4 / ATCC 38163 / CBS 112.46 / NRRL 194 / M139</strain>
    </source>
</reference>
<reference key="3">
    <citation type="journal article" date="2009" name="Fungal Genet. Biol.">
        <title>The 2008 update of the Aspergillus nidulans genome annotation: a community effort.</title>
        <authorList>
            <person name="Wortman J.R."/>
            <person name="Gilsenan J.M."/>
            <person name="Joardar V."/>
            <person name="Deegan J."/>
            <person name="Clutterbuck J."/>
            <person name="Andersen M.R."/>
            <person name="Archer D."/>
            <person name="Bencina M."/>
            <person name="Braus G."/>
            <person name="Coutinho P."/>
            <person name="von Dohren H."/>
            <person name="Doonan J."/>
            <person name="Driessen A.J."/>
            <person name="Durek P."/>
            <person name="Espeso E."/>
            <person name="Fekete E."/>
            <person name="Flipphi M."/>
            <person name="Estrada C.G."/>
            <person name="Geysens S."/>
            <person name="Goldman G."/>
            <person name="de Groot P.W."/>
            <person name="Hansen K."/>
            <person name="Harris S.D."/>
            <person name="Heinekamp T."/>
            <person name="Helmstaedt K."/>
            <person name="Henrissat B."/>
            <person name="Hofmann G."/>
            <person name="Homan T."/>
            <person name="Horio T."/>
            <person name="Horiuchi H."/>
            <person name="James S."/>
            <person name="Jones M."/>
            <person name="Karaffa L."/>
            <person name="Karanyi Z."/>
            <person name="Kato M."/>
            <person name="Keller N."/>
            <person name="Kelly D.E."/>
            <person name="Kiel J.A."/>
            <person name="Kim J.M."/>
            <person name="van der Klei I.J."/>
            <person name="Klis F.M."/>
            <person name="Kovalchuk A."/>
            <person name="Krasevec N."/>
            <person name="Kubicek C.P."/>
            <person name="Liu B."/>
            <person name="Maccabe A."/>
            <person name="Meyer V."/>
            <person name="Mirabito P."/>
            <person name="Miskei M."/>
            <person name="Mos M."/>
            <person name="Mullins J."/>
            <person name="Nelson D.R."/>
            <person name="Nielsen J."/>
            <person name="Oakley B.R."/>
            <person name="Osmani S.A."/>
            <person name="Pakula T."/>
            <person name="Paszewski A."/>
            <person name="Paulsen I."/>
            <person name="Pilsyk S."/>
            <person name="Pocsi I."/>
            <person name="Punt P.J."/>
            <person name="Ram A.F."/>
            <person name="Ren Q."/>
            <person name="Robellet X."/>
            <person name="Robson G."/>
            <person name="Seiboth B."/>
            <person name="van Solingen P."/>
            <person name="Specht T."/>
            <person name="Sun J."/>
            <person name="Taheri-Talesh N."/>
            <person name="Takeshita N."/>
            <person name="Ussery D."/>
            <person name="vanKuyk P.A."/>
            <person name="Visser H."/>
            <person name="van de Vondervoort P.J."/>
            <person name="de Vries R.P."/>
            <person name="Walton J."/>
            <person name="Xiang X."/>
            <person name="Xiong Y."/>
            <person name="Zeng A.P."/>
            <person name="Brandt B.W."/>
            <person name="Cornell M.J."/>
            <person name="van den Hondel C.A."/>
            <person name="Visser J."/>
            <person name="Oliver S.G."/>
            <person name="Turner G."/>
        </authorList>
    </citation>
    <scope>GENOME REANNOTATION</scope>
    <source>
        <strain>FGSC A4 / ATCC 38163 / CBS 112.46 / NRRL 194 / M139</strain>
    </source>
</reference>
<protein>
    <recommendedName>
        <fullName>Phosphoadenosine phosphosulfate reductase</fullName>
        <ecNumber>1.8.4.8</ecNumber>
    </recommendedName>
    <alternativeName>
        <fullName>3'-phosphoadenylylsulfate reductase</fullName>
    </alternativeName>
    <alternativeName>
        <fullName>PAPS reductase, thioredoxin dependent</fullName>
    </alternativeName>
    <alternativeName>
        <fullName>PAdoPS reductase</fullName>
    </alternativeName>
</protein>
<name>MET16_EMENI</name>